<evidence type="ECO:0000255" key="1"/>
<evidence type="ECO:0000255" key="2">
    <source>
        <dbReference type="HAMAP-Rule" id="MF_00913"/>
    </source>
</evidence>
<comment type="function">
    <text evidence="2">Peptidoglycan polymerase that is essential for cell division.</text>
</comment>
<comment type="catalytic activity">
    <reaction evidence="2">
        <text>[GlcNAc-(1-&gt;4)-Mur2Ac(oyl-L-Ala-gamma-D-Glu-L-Lys-D-Ala-D-Ala)](n)-di-trans,octa-cis-undecaprenyl diphosphate + beta-D-GlcNAc-(1-&gt;4)-Mur2Ac(oyl-L-Ala-gamma-D-Glu-L-Lys-D-Ala-D-Ala)-di-trans,octa-cis-undecaprenyl diphosphate = [GlcNAc-(1-&gt;4)-Mur2Ac(oyl-L-Ala-gamma-D-Glu-L-Lys-D-Ala-D-Ala)](n+1)-di-trans,octa-cis-undecaprenyl diphosphate + di-trans,octa-cis-undecaprenyl diphosphate + H(+)</text>
        <dbReference type="Rhea" id="RHEA:23708"/>
        <dbReference type="Rhea" id="RHEA-COMP:9602"/>
        <dbReference type="Rhea" id="RHEA-COMP:9603"/>
        <dbReference type="ChEBI" id="CHEBI:15378"/>
        <dbReference type="ChEBI" id="CHEBI:58405"/>
        <dbReference type="ChEBI" id="CHEBI:60033"/>
        <dbReference type="ChEBI" id="CHEBI:78435"/>
        <dbReference type="EC" id="2.4.99.28"/>
    </reaction>
</comment>
<comment type="pathway">
    <text evidence="2">Cell wall biogenesis; peptidoglycan biosynthesis.</text>
</comment>
<comment type="subcellular location">
    <subcellularLocation>
        <location evidence="2">Cell inner membrane</location>
        <topology evidence="2">Multi-pass membrane protein</topology>
    </subcellularLocation>
    <text evidence="2">Localizes to the division septum.</text>
</comment>
<comment type="similarity">
    <text evidence="2">Belongs to the SEDS family. FtsW subfamily.</text>
</comment>
<organism>
    <name type="scientific">Pseudoalteromonas translucida (strain TAC 125)</name>
    <dbReference type="NCBI Taxonomy" id="326442"/>
    <lineage>
        <taxon>Bacteria</taxon>
        <taxon>Pseudomonadati</taxon>
        <taxon>Pseudomonadota</taxon>
        <taxon>Gammaproteobacteria</taxon>
        <taxon>Alteromonadales</taxon>
        <taxon>Pseudoalteromonadaceae</taxon>
        <taxon>Pseudoalteromonas</taxon>
    </lineage>
</organism>
<protein>
    <recommendedName>
        <fullName evidence="2">Probable peptidoglycan glycosyltransferase FtsW</fullName>
        <shortName evidence="2">PGT</shortName>
        <ecNumber evidence="2">2.4.99.28</ecNumber>
    </recommendedName>
    <alternativeName>
        <fullName evidence="2">Cell division protein FtsW</fullName>
    </alternativeName>
    <alternativeName>
        <fullName evidence="2">Cell wall polymerase</fullName>
    </alternativeName>
    <alternativeName>
        <fullName evidence="2">Peptidoglycan polymerase</fullName>
        <shortName evidence="2">PG polymerase</shortName>
    </alternativeName>
</protein>
<accession>Q3IG03</accession>
<feature type="chain" id="PRO_0000415208" description="Probable peptidoglycan glycosyltransferase FtsW">
    <location>
        <begin position="1"/>
        <end position="398"/>
    </location>
</feature>
<feature type="topological domain" description="Cytoplasmic" evidence="1">
    <location>
        <begin position="1"/>
        <end position="25"/>
    </location>
</feature>
<feature type="transmembrane region" description="Helical" evidence="2">
    <location>
        <begin position="26"/>
        <end position="46"/>
    </location>
</feature>
<feature type="topological domain" description="Periplasmic" evidence="1">
    <location>
        <begin position="47"/>
        <end position="69"/>
    </location>
</feature>
<feature type="transmembrane region" description="Helical" evidence="2">
    <location>
        <begin position="70"/>
        <end position="90"/>
    </location>
</feature>
<feature type="topological domain" description="Cytoplasmic" evidence="1">
    <location>
        <position position="91"/>
    </location>
</feature>
<feature type="transmembrane region" description="Helical" evidence="2">
    <location>
        <begin position="92"/>
        <end position="112"/>
    </location>
</feature>
<feature type="topological domain" description="Periplasmic" evidence="1">
    <location>
        <begin position="113"/>
        <end position="120"/>
    </location>
</feature>
<feature type="transmembrane region" description="Helical" evidence="2">
    <location>
        <begin position="121"/>
        <end position="141"/>
    </location>
</feature>
<feature type="topological domain" description="Cytoplasmic" evidence="1">
    <location>
        <begin position="142"/>
        <end position="156"/>
    </location>
</feature>
<feature type="transmembrane region" description="Helical" evidence="2">
    <location>
        <begin position="157"/>
        <end position="177"/>
    </location>
</feature>
<feature type="topological domain" description="Periplasmic" evidence="1">
    <location>
        <begin position="178"/>
        <end position="179"/>
    </location>
</feature>
<feature type="transmembrane region" description="Helical" evidence="2">
    <location>
        <begin position="180"/>
        <end position="200"/>
    </location>
</feature>
<feature type="topological domain" description="Cytoplasmic" evidence="1">
    <location>
        <position position="201"/>
    </location>
</feature>
<feature type="transmembrane region" description="Helical" evidence="2">
    <location>
        <begin position="202"/>
        <end position="222"/>
    </location>
</feature>
<feature type="topological domain" description="Periplasmic" evidence="1">
    <location>
        <begin position="223"/>
        <end position="289"/>
    </location>
</feature>
<feature type="transmembrane region" description="Helical" evidence="2">
    <location>
        <begin position="290"/>
        <end position="312"/>
    </location>
</feature>
<feature type="topological domain" description="Cytoplasmic" evidence="1">
    <location>
        <begin position="313"/>
        <end position="324"/>
    </location>
</feature>
<feature type="transmembrane region" description="Helical" evidence="2">
    <location>
        <begin position="325"/>
        <end position="345"/>
    </location>
</feature>
<feature type="topological domain" description="Periplasmic" evidence="1">
    <location>
        <begin position="346"/>
        <end position="356"/>
    </location>
</feature>
<feature type="transmembrane region" description="Helical" evidence="2">
    <location>
        <begin position="357"/>
        <end position="377"/>
    </location>
</feature>
<feature type="topological domain" description="Cytoplasmic" evidence="1">
    <location>
        <begin position="378"/>
        <end position="398"/>
    </location>
</feature>
<dbReference type="EC" id="2.4.99.28" evidence="2"/>
<dbReference type="EMBL" id="CR954246">
    <property type="protein sequence ID" value="CAI87553.1"/>
    <property type="molecule type" value="Genomic_DNA"/>
</dbReference>
<dbReference type="SMR" id="Q3IG03"/>
<dbReference type="STRING" id="326442.PSHAa2505"/>
<dbReference type="KEGG" id="pha:PSHAa2505"/>
<dbReference type="eggNOG" id="COG0772">
    <property type="taxonomic scope" value="Bacteria"/>
</dbReference>
<dbReference type="HOGENOM" id="CLU_029243_0_1_6"/>
<dbReference type="UniPathway" id="UPA00219"/>
<dbReference type="Proteomes" id="UP000006843">
    <property type="component" value="Chromosome I"/>
</dbReference>
<dbReference type="GO" id="GO:0032153">
    <property type="term" value="C:cell division site"/>
    <property type="evidence" value="ECO:0007669"/>
    <property type="project" value="UniProtKB-UniRule"/>
</dbReference>
<dbReference type="GO" id="GO:0005886">
    <property type="term" value="C:plasma membrane"/>
    <property type="evidence" value="ECO:0007669"/>
    <property type="project" value="UniProtKB-SubCell"/>
</dbReference>
<dbReference type="GO" id="GO:0015648">
    <property type="term" value="F:lipid-linked peptidoglycan transporter activity"/>
    <property type="evidence" value="ECO:0007669"/>
    <property type="project" value="TreeGrafter"/>
</dbReference>
<dbReference type="GO" id="GO:0008955">
    <property type="term" value="F:peptidoglycan glycosyltransferase activity"/>
    <property type="evidence" value="ECO:0007669"/>
    <property type="project" value="UniProtKB-UniRule"/>
</dbReference>
<dbReference type="GO" id="GO:0071555">
    <property type="term" value="P:cell wall organization"/>
    <property type="evidence" value="ECO:0007669"/>
    <property type="project" value="UniProtKB-KW"/>
</dbReference>
<dbReference type="GO" id="GO:0043093">
    <property type="term" value="P:FtsZ-dependent cytokinesis"/>
    <property type="evidence" value="ECO:0007669"/>
    <property type="project" value="UniProtKB-UniRule"/>
</dbReference>
<dbReference type="GO" id="GO:0009252">
    <property type="term" value="P:peptidoglycan biosynthetic process"/>
    <property type="evidence" value="ECO:0007669"/>
    <property type="project" value="UniProtKB-UniRule"/>
</dbReference>
<dbReference type="GO" id="GO:0008360">
    <property type="term" value="P:regulation of cell shape"/>
    <property type="evidence" value="ECO:0007669"/>
    <property type="project" value="UniProtKB-KW"/>
</dbReference>
<dbReference type="HAMAP" id="MF_00913">
    <property type="entry name" value="PGT_FtsW_proteobact"/>
    <property type="match status" value="1"/>
</dbReference>
<dbReference type="InterPro" id="IPR018365">
    <property type="entry name" value="Cell_cycle_FtsW-rel_CS"/>
</dbReference>
<dbReference type="InterPro" id="IPR013437">
    <property type="entry name" value="FtsW"/>
</dbReference>
<dbReference type="InterPro" id="IPR001182">
    <property type="entry name" value="FtsW/RodA"/>
</dbReference>
<dbReference type="NCBIfam" id="TIGR02614">
    <property type="entry name" value="ftsW"/>
    <property type="match status" value="1"/>
</dbReference>
<dbReference type="NCBIfam" id="NF008042">
    <property type="entry name" value="PRK10774.1"/>
    <property type="match status" value="1"/>
</dbReference>
<dbReference type="PANTHER" id="PTHR30474">
    <property type="entry name" value="CELL CYCLE PROTEIN"/>
    <property type="match status" value="1"/>
</dbReference>
<dbReference type="PANTHER" id="PTHR30474:SF2">
    <property type="entry name" value="PEPTIDOGLYCAN GLYCOSYLTRANSFERASE FTSW-RELATED"/>
    <property type="match status" value="1"/>
</dbReference>
<dbReference type="Pfam" id="PF01098">
    <property type="entry name" value="FTSW_RODA_SPOVE"/>
    <property type="match status" value="1"/>
</dbReference>
<dbReference type="PROSITE" id="PS00428">
    <property type="entry name" value="FTSW_RODA_SPOVE"/>
    <property type="match status" value="1"/>
</dbReference>
<sequence>MCYGGTAMMAFADIKEALTPKPSAQLYDVPLLYCMLMLMGVGFVMVTSASMPTADRLFGNIYHFTIRHGIFLALSFCLFWITTSVPMSWWKKANPYLLLVGLGLLLIVLIVGREVNGSTRWIPIGPFNIQASELAKLFFFSYISGYLVRKRSEVQENIKGFIKPILVFAAYAGLILMQPDLGTVVVMFVTTVGLLFLAGAKLWQFFVLILTGVALVIGLIVLEPYRMARVIGFLEPWDDPFGKGYQLVQSLMAYSQGDWFGQGLGNSVQKLQYLPEAHTDFIFAVIAEELGFVGVSSILIVLGTLVFRALLIGQNALKNGKEYEGYLALAIGIWFAFQTMVNVGASAGILPTKGLTLPFISYGGSSLLMMTIAAGILLRVDFETKMATKQATSGGAKR</sequence>
<gene>
    <name evidence="2" type="primary">ftsW</name>
    <name type="ordered locus">PSHAa2505</name>
</gene>
<keyword id="KW-0131">Cell cycle</keyword>
<keyword id="KW-0132">Cell division</keyword>
<keyword id="KW-0997">Cell inner membrane</keyword>
<keyword id="KW-1003">Cell membrane</keyword>
<keyword id="KW-0133">Cell shape</keyword>
<keyword id="KW-0961">Cell wall biogenesis/degradation</keyword>
<keyword id="KW-0328">Glycosyltransferase</keyword>
<keyword id="KW-0472">Membrane</keyword>
<keyword id="KW-0573">Peptidoglycan synthesis</keyword>
<keyword id="KW-1185">Reference proteome</keyword>
<keyword id="KW-0808">Transferase</keyword>
<keyword id="KW-0812">Transmembrane</keyword>
<keyword id="KW-1133">Transmembrane helix</keyword>
<proteinExistence type="inferred from homology"/>
<name>FTSW_PSET1</name>
<reference key="1">
    <citation type="journal article" date="2005" name="Genome Res.">
        <title>Coping with cold: the genome of the versatile marine Antarctica bacterium Pseudoalteromonas haloplanktis TAC125.</title>
        <authorList>
            <person name="Medigue C."/>
            <person name="Krin E."/>
            <person name="Pascal G."/>
            <person name="Barbe V."/>
            <person name="Bernsel A."/>
            <person name="Bertin P.N."/>
            <person name="Cheung F."/>
            <person name="Cruveiller S."/>
            <person name="D'Amico S."/>
            <person name="Duilio A."/>
            <person name="Fang G."/>
            <person name="Feller G."/>
            <person name="Ho C."/>
            <person name="Mangenot S."/>
            <person name="Marino G."/>
            <person name="Nilsson J."/>
            <person name="Parrilli E."/>
            <person name="Rocha E.P.C."/>
            <person name="Rouy Z."/>
            <person name="Sekowska A."/>
            <person name="Tutino M.L."/>
            <person name="Vallenet D."/>
            <person name="von Heijne G."/>
            <person name="Danchin A."/>
        </authorList>
    </citation>
    <scope>NUCLEOTIDE SEQUENCE [LARGE SCALE GENOMIC DNA]</scope>
    <source>
        <strain>TAC 125</strain>
    </source>
</reference>